<feature type="chain" id="PRO_1000003428" description="Large ribosomal subunit protein eL15">
    <location>
        <begin position="1"/>
        <end position="186"/>
    </location>
</feature>
<feature type="region of interest" description="Disordered" evidence="2">
    <location>
        <begin position="163"/>
        <end position="186"/>
    </location>
</feature>
<feature type="compositionally biased region" description="Basic residues" evidence="2">
    <location>
        <begin position="170"/>
        <end position="179"/>
    </location>
</feature>
<gene>
    <name evidence="1" type="primary">rpl15e</name>
    <name type="ordered locus">Msp_1243</name>
</gene>
<evidence type="ECO:0000255" key="1">
    <source>
        <dbReference type="HAMAP-Rule" id="MF_00256"/>
    </source>
</evidence>
<evidence type="ECO:0000256" key="2">
    <source>
        <dbReference type="SAM" id="MobiDB-lite"/>
    </source>
</evidence>
<evidence type="ECO:0000305" key="3"/>
<dbReference type="EMBL" id="CP000102">
    <property type="protein sequence ID" value="ABC57620.1"/>
    <property type="molecule type" value="Genomic_DNA"/>
</dbReference>
<dbReference type="SMR" id="Q2NEY3"/>
<dbReference type="STRING" id="339860.Msp_1243"/>
<dbReference type="KEGG" id="mst:Msp_1243"/>
<dbReference type="eggNOG" id="arCOG04209">
    <property type="taxonomic scope" value="Archaea"/>
</dbReference>
<dbReference type="HOGENOM" id="CLU_080796_1_0_2"/>
<dbReference type="Proteomes" id="UP000001931">
    <property type="component" value="Chromosome"/>
</dbReference>
<dbReference type="GO" id="GO:0022625">
    <property type="term" value="C:cytosolic large ribosomal subunit"/>
    <property type="evidence" value="ECO:0007669"/>
    <property type="project" value="TreeGrafter"/>
</dbReference>
<dbReference type="GO" id="GO:0003723">
    <property type="term" value="F:RNA binding"/>
    <property type="evidence" value="ECO:0007669"/>
    <property type="project" value="TreeGrafter"/>
</dbReference>
<dbReference type="GO" id="GO:0003735">
    <property type="term" value="F:structural constituent of ribosome"/>
    <property type="evidence" value="ECO:0007669"/>
    <property type="project" value="InterPro"/>
</dbReference>
<dbReference type="GO" id="GO:0002181">
    <property type="term" value="P:cytoplasmic translation"/>
    <property type="evidence" value="ECO:0007669"/>
    <property type="project" value="TreeGrafter"/>
</dbReference>
<dbReference type="FunFam" id="3.40.1120.10:FF:000002">
    <property type="entry name" value="50S ribosomal protein L15e"/>
    <property type="match status" value="1"/>
</dbReference>
<dbReference type="Gene3D" id="3.40.1120.10">
    <property type="entry name" value="Ribosomal protein l15e"/>
    <property type="match status" value="1"/>
</dbReference>
<dbReference type="HAMAP" id="MF_00256">
    <property type="entry name" value="Ribosomal_eL15"/>
    <property type="match status" value="1"/>
</dbReference>
<dbReference type="InterPro" id="IPR024794">
    <property type="entry name" value="Rbsml_eL15_core_dom_sf"/>
</dbReference>
<dbReference type="InterPro" id="IPR000439">
    <property type="entry name" value="Ribosomal_eL15"/>
</dbReference>
<dbReference type="InterPro" id="IPR020926">
    <property type="entry name" value="Ribosomal_eL15_arc"/>
</dbReference>
<dbReference type="InterPro" id="IPR020925">
    <property type="entry name" value="Ribosomal_eL15_CS"/>
</dbReference>
<dbReference type="InterPro" id="IPR012678">
    <property type="entry name" value="Ribosomal_uL23/eL15/eS24_sf"/>
</dbReference>
<dbReference type="NCBIfam" id="NF003269">
    <property type="entry name" value="PRK04243.1"/>
    <property type="match status" value="1"/>
</dbReference>
<dbReference type="PANTHER" id="PTHR11847:SF4">
    <property type="entry name" value="LARGE RIBOSOMAL SUBUNIT PROTEIN EL15"/>
    <property type="match status" value="1"/>
</dbReference>
<dbReference type="PANTHER" id="PTHR11847">
    <property type="entry name" value="RIBOSOMAL PROTEIN L15"/>
    <property type="match status" value="1"/>
</dbReference>
<dbReference type="Pfam" id="PF00827">
    <property type="entry name" value="Ribosomal_L15e"/>
    <property type="match status" value="1"/>
</dbReference>
<dbReference type="SMART" id="SM01384">
    <property type="entry name" value="Ribosomal_L15e"/>
    <property type="match status" value="1"/>
</dbReference>
<dbReference type="SUPFAM" id="SSF54189">
    <property type="entry name" value="Ribosomal proteins S24e, L23 and L15e"/>
    <property type="match status" value="1"/>
</dbReference>
<dbReference type="PROSITE" id="PS01194">
    <property type="entry name" value="RIBOSOMAL_L15E"/>
    <property type="match status" value="1"/>
</dbReference>
<reference key="1">
    <citation type="journal article" date="2006" name="J. Bacteriol.">
        <title>The genome sequence of Methanosphaera stadtmanae reveals why this human intestinal archaeon is restricted to methanol and H2 for methane formation and ATP synthesis.</title>
        <authorList>
            <person name="Fricke W.F."/>
            <person name="Seedorf H."/>
            <person name="Henne A."/>
            <person name="Kruer M."/>
            <person name="Liesegang H."/>
            <person name="Hedderich R."/>
            <person name="Gottschalk G."/>
            <person name="Thauer R.K."/>
        </authorList>
    </citation>
    <scope>NUCLEOTIDE SEQUENCE [LARGE SCALE GENOMIC DNA]</scope>
    <source>
        <strain>ATCC 43021 / DSM 3091 / JCM 11832 / MCB-3</strain>
    </source>
</reference>
<comment type="similarity">
    <text evidence="1">Belongs to the eukaryotic ribosomal protein eL15 family.</text>
</comment>
<name>RL15E_METST</name>
<sequence>MRCYIMYKYMKEAWKNPDESYVKELMRERLPKWRRQPVIIRIDKPTRIDRARRLGYKAKTGYVVARIRVRRGSRRKSRFKNGRDPKRMGVNKISGEKSIQRMAEERVARKYPNLEVLNSYWVWEDGKAKYYEVILVDPQCPSIQHDNKINWICSKKHTRRAFRGLTSAGKKGRGLNKKGKGAEKVR</sequence>
<accession>Q2NEY3</accession>
<proteinExistence type="inferred from homology"/>
<protein>
    <recommendedName>
        <fullName evidence="1">Large ribosomal subunit protein eL15</fullName>
    </recommendedName>
    <alternativeName>
        <fullName evidence="3">50S ribosomal protein L15e</fullName>
    </alternativeName>
</protein>
<keyword id="KW-1185">Reference proteome</keyword>
<keyword id="KW-0687">Ribonucleoprotein</keyword>
<keyword id="KW-0689">Ribosomal protein</keyword>
<organism>
    <name type="scientific">Methanosphaera stadtmanae (strain ATCC 43021 / DSM 3091 / JCM 11832 / MCB-3)</name>
    <dbReference type="NCBI Taxonomy" id="339860"/>
    <lineage>
        <taxon>Archaea</taxon>
        <taxon>Methanobacteriati</taxon>
        <taxon>Methanobacteriota</taxon>
        <taxon>Methanomada group</taxon>
        <taxon>Methanobacteria</taxon>
        <taxon>Methanobacteriales</taxon>
        <taxon>Methanobacteriaceae</taxon>
        <taxon>Methanosphaera</taxon>
    </lineage>
</organism>